<organism>
    <name type="scientific">Parasynechococcus marenigrum (strain WH8102)</name>
    <dbReference type="NCBI Taxonomy" id="84588"/>
    <lineage>
        <taxon>Bacteria</taxon>
        <taxon>Bacillati</taxon>
        <taxon>Cyanobacteriota</taxon>
        <taxon>Cyanophyceae</taxon>
        <taxon>Synechococcales</taxon>
        <taxon>Prochlorococcaceae</taxon>
        <taxon>Parasynechococcus</taxon>
        <taxon>Parasynechococcus marenigrum</taxon>
    </lineage>
</organism>
<name>HISX_PARMW</name>
<accession>Q7U8K7</accession>
<dbReference type="EC" id="1.1.1.23" evidence="1"/>
<dbReference type="EMBL" id="BX569690">
    <property type="protein sequence ID" value="CAE07125.1"/>
    <property type="molecule type" value="Genomic_DNA"/>
</dbReference>
<dbReference type="RefSeq" id="WP_011127477.1">
    <property type="nucleotide sequence ID" value="NC_005070.1"/>
</dbReference>
<dbReference type="SMR" id="Q7U8K7"/>
<dbReference type="STRING" id="84588.SYNW0610"/>
<dbReference type="KEGG" id="syw:SYNW0610"/>
<dbReference type="eggNOG" id="COG0141">
    <property type="taxonomic scope" value="Bacteria"/>
</dbReference>
<dbReference type="HOGENOM" id="CLU_006732_3_3_3"/>
<dbReference type="UniPathway" id="UPA00031">
    <property type="reaction ID" value="UER00014"/>
</dbReference>
<dbReference type="Proteomes" id="UP000001422">
    <property type="component" value="Chromosome"/>
</dbReference>
<dbReference type="GO" id="GO:0005829">
    <property type="term" value="C:cytosol"/>
    <property type="evidence" value="ECO:0007669"/>
    <property type="project" value="TreeGrafter"/>
</dbReference>
<dbReference type="GO" id="GO:0004399">
    <property type="term" value="F:histidinol dehydrogenase activity"/>
    <property type="evidence" value="ECO:0007669"/>
    <property type="project" value="UniProtKB-UniRule"/>
</dbReference>
<dbReference type="GO" id="GO:0051287">
    <property type="term" value="F:NAD binding"/>
    <property type="evidence" value="ECO:0007669"/>
    <property type="project" value="InterPro"/>
</dbReference>
<dbReference type="GO" id="GO:0008270">
    <property type="term" value="F:zinc ion binding"/>
    <property type="evidence" value="ECO:0007669"/>
    <property type="project" value="UniProtKB-UniRule"/>
</dbReference>
<dbReference type="GO" id="GO:0000105">
    <property type="term" value="P:L-histidine biosynthetic process"/>
    <property type="evidence" value="ECO:0007669"/>
    <property type="project" value="UniProtKB-UniRule"/>
</dbReference>
<dbReference type="CDD" id="cd06572">
    <property type="entry name" value="Histidinol_dh"/>
    <property type="match status" value="1"/>
</dbReference>
<dbReference type="FunFam" id="3.40.50.1980:FF:000001">
    <property type="entry name" value="Histidinol dehydrogenase"/>
    <property type="match status" value="1"/>
</dbReference>
<dbReference type="FunFam" id="3.40.50.1980:FF:000026">
    <property type="entry name" value="Histidinol dehydrogenase"/>
    <property type="match status" value="1"/>
</dbReference>
<dbReference type="Gene3D" id="1.20.5.1300">
    <property type="match status" value="1"/>
</dbReference>
<dbReference type="Gene3D" id="3.40.50.1980">
    <property type="entry name" value="Nitrogenase molybdenum iron protein domain"/>
    <property type="match status" value="2"/>
</dbReference>
<dbReference type="HAMAP" id="MF_01024">
    <property type="entry name" value="HisD"/>
    <property type="match status" value="1"/>
</dbReference>
<dbReference type="InterPro" id="IPR016161">
    <property type="entry name" value="Ald_DH/histidinol_DH"/>
</dbReference>
<dbReference type="InterPro" id="IPR001692">
    <property type="entry name" value="Histidinol_DH_CS"/>
</dbReference>
<dbReference type="InterPro" id="IPR022695">
    <property type="entry name" value="Histidinol_DH_monofunct"/>
</dbReference>
<dbReference type="InterPro" id="IPR012131">
    <property type="entry name" value="Hstdl_DH"/>
</dbReference>
<dbReference type="NCBIfam" id="TIGR00069">
    <property type="entry name" value="hisD"/>
    <property type="match status" value="1"/>
</dbReference>
<dbReference type="PANTHER" id="PTHR21256:SF2">
    <property type="entry name" value="HISTIDINE BIOSYNTHESIS TRIFUNCTIONAL PROTEIN"/>
    <property type="match status" value="1"/>
</dbReference>
<dbReference type="PANTHER" id="PTHR21256">
    <property type="entry name" value="HISTIDINOL DEHYDROGENASE HDH"/>
    <property type="match status" value="1"/>
</dbReference>
<dbReference type="Pfam" id="PF00815">
    <property type="entry name" value="Histidinol_dh"/>
    <property type="match status" value="1"/>
</dbReference>
<dbReference type="PIRSF" id="PIRSF000099">
    <property type="entry name" value="Histidinol_dh"/>
    <property type="match status" value="1"/>
</dbReference>
<dbReference type="PRINTS" id="PR00083">
    <property type="entry name" value="HOLDHDRGNASE"/>
</dbReference>
<dbReference type="SUPFAM" id="SSF53720">
    <property type="entry name" value="ALDH-like"/>
    <property type="match status" value="1"/>
</dbReference>
<dbReference type="PROSITE" id="PS00611">
    <property type="entry name" value="HISOL_DEHYDROGENASE"/>
    <property type="match status" value="1"/>
</dbReference>
<keyword id="KW-0028">Amino-acid biosynthesis</keyword>
<keyword id="KW-0368">Histidine biosynthesis</keyword>
<keyword id="KW-0479">Metal-binding</keyword>
<keyword id="KW-0520">NAD</keyword>
<keyword id="KW-0560">Oxidoreductase</keyword>
<keyword id="KW-0862">Zinc</keyword>
<gene>
    <name evidence="1" type="primary">hisD</name>
    <name type="ordered locus">SYNW0610</name>
</gene>
<proteinExistence type="inferred from homology"/>
<evidence type="ECO:0000255" key="1">
    <source>
        <dbReference type="HAMAP-Rule" id="MF_01024"/>
    </source>
</evidence>
<sequence>MSESRSLAFPLRCVRDRQQAEAELQRLTRRTQTSQQKDVQGRVDVILKAVRERGDAAVCDFTERFDGFRPDPVAVPKHQLEQAWKALPENLRDALELAHRRISEFHQRQRPEDIRMEGAHGEQLGRRWRPVQRAGLYVPGGRAAYPSTVLMNAVPARVAGVEQVVICSPAGSNGQVNPVVLAAAHLAGVHTVMRIGGAQAIAAMAFGTESVPKVDVISGPGNIYVTLAKQAVYGQVGIDSLAGPSEVLVIADQSAQPEQVAADLLAQAEHDPLASSVLITTSHQLADGISSAIAQQLEDHPRREICEASLRDWGLVVVCDDLETCAQLSDSFAPEHLELLVERPEALADRIQHAGAIFLGPWSPEAVGDYLAGPNHTLPTCAAARFSGALSVETFMRHTSMIQFNRAALDATASAVCELAESEGLHSHAESVRKRLS</sequence>
<comment type="function">
    <text evidence="1">Catalyzes the sequential NAD-dependent oxidations of L-histidinol to L-histidinaldehyde and then to L-histidine.</text>
</comment>
<comment type="catalytic activity">
    <reaction evidence="1">
        <text>L-histidinol + 2 NAD(+) + H2O = L-histidine + 2 NADH + 3 H(+)</text>
        <dbReference type="Rhea" id="RHEA:20641"/>
        <dbReference type="ChEBI" id="CHEBI:15377"/>
        <dbReference type="ChEBI" id="CHEBI:15378"/>
        <dbReference type="ChEBI" id="CHEBI:57540"/>
        <dbReference type="ChEBI" id="CHEBI:57595"/>
        <dbReference type="ChEBI" id="CHEBI:57699"/>
        <dbReference type="ChEBI" id="CHEBI:57945"/>
        <dbReference type="EC" id="1.1.1.23"/>
    </reaction>
</comment>
<comment type="cofactor">
    <cofactor evidence="1">
        <name>Zn(2+)</name>
        <dbReference type="ChEBI" id="CHEBI:29105"/>
    </cofactor>
    <text evidence="1">Binds 1 zinc ion per subunit.</text>
</comment>
<comment type="pathway">
    <text evidence="1">Amino-acid biosynthesis; L-histidine biosynthesis; L-histidine from 5-phospho-alpha-D-ribose 1-diphosphate: step 9/9.</text>
</comment>
<comment type="similarity">
    <text evidence="1">Belongs to the histidinol dehydrogenase family.</text>
</comment>
<protein>
    <recommendedName>
        <fullName evidence="1">Histidinol dehydrogenase</fullName>
        <shortName evidence="1">HDH</shortName>
        <ecNumber evidence="1">1.1.1.23</ecNumber>
    </recommendedName>
</protein>
<reference key="1">
    <citation type="journal article" date="2003" name="Nature">
        <title>The genome of a motile marine Synechococcus.</title>
        <authorList>
            <person name="Palenik B."/>
            <person name="Brahamsha B."/>
            <person name="Larimer F.W."/>
            <person name="Land M.L."/>
            <person name="Hauser L."/>
            <person name="Chain P."/>
            <person name="Lamerdin J.E."/>
            <person name="Regala W."/>
            <person name="Allen E.E."/>
            <person name="McCarren J."/>
            <person name="Paulsen I.T."/>
            <person name="Dufresne A."/>
            <person name="Partensky F."/>
            <person name="Webb E.A."/>
            <person name="Waterbury J."/>
        </authorList>
    </citation>
    <scope>NUCLEOTIDE SEQUENCE [LARGE SCALE GENOMIC DNA]</scope>
    <source>
        <strain>WH8102</strain>
    </source>
</reference>
<feature type="chain" id="PRO_0000135864" description="Histidinol dehydrogenase">
    <location>
        <begin position="1"/>
        <end position="437"/>
    </location>
</feature>
<feature type="active site" description="Proton acceptor" evidence="1">
    <location>
        <position position="335"/>
    </location>
</feature>
<feature type="active site" description="Proton acceptor" evidence="1">
    <location>
        <position position="336"/>
    </location>
</feature>
<feature type="binding site" evidence="1">
    <location>
        <position position="137"/>
    </location>
    <ligand>
        <name>NAD(+)</name>
        <dbReference type="ChEBI" id="CHEBI:57540"/>
    </ligand>
</feature>
<feature type="binding site" evidence="1">
    <location>
        <position position="199"/>
    </location>
    <ligand>
        <name>NAD(+)</name>
        <dbReference type="ChEBI" id="CHEBI:57540"/>
    </ligand>
</feature>
<feature type="binding site" evidence="1">
    <location>
        <position position="222"/>
    </location>
    <ligand>
        <name>NAD(+)</name>
        <dbReference type="ChEBI" id="CHEBI:57540"/>
    </ligand>
</feature>
<feature type="binding site" evidence="1">
    <location>
        <position position="245"/>
    </location>
    <ligand>
        <name>substrate</name>
    </ligand>
</feature>
<feature type="binding site" evidence="1">
    <location>
        <position position="267"/>
    </location>
    <ligand>
        <name>substrate</name>
    </ligand>
</feature>
<feature type="binding site" evidence="1">
    <location>
        <position position="267"/>
    </location>
    <ligand>
        <name>Zn(2+)</name>
        <dbReference type="ChEBI" id="CHEBI:29105"/>
    </ligand>
</feature>
<feature type="binding site" evidence="1">
    <location>
        <position position="270"/>
    </location>
    <ligand>
        <name>substrate</name>
    </ligand>
</feature>
<feature type="binding site" evidence="1">
    <location>
        <position position="270"/>
    </location>
    <ligand>
        <name>Zn(2+)</name>
        <dbReference type="ChEBI" id="CHEBI:29105"/>
    </ligand>
</feature>
<feature type="binding site" evidence="1">
    <location>
        <position position="336"/>
    </location>
    <ligand>
        <name>substrate</name>
    </ligand>
</feature>
<feature type="binding site" evidence="1">
    <location>
        <position position="369"/>
    </location>
    <ligand>
        <name>substrate</name>
    </ligand>
</feature>
<feature type="binding site" evidence="1">
    <location>
        <position position="369"/>
    </location>
    <ligand>
        <name>Zn(2+)</name>
        <dbReference type="ChEBI" id="CHEBI:29105"/>
    </ligand>
</feature>
<feature type="binding site" evidence="1">
    <location>
        <position position="423"/>
    </location>
    <ligand>
        <name>substrate</name>
    </ligand>
</feature>
<feature type="binding site" evidence="1">
    <location>
        <position position="428"/>
    </location>
    <ligand>
        <name>substrate</name>
    </ligand>
</feature>
<feature type="binding site" evidence="1">
    <location>
        <position position="428"/>
    </location>
    <ligand>
        <name>Zn(2+)</name>
        <dbReference type="ChEBI" id="CHEBI:29105"/>
    </ligand>
</feature>